<keyword id="KW-0511">Multifunctional enzyme</keyword>
<keyword id="KW-0596">Phosphopantetheine</keyword>
<keyword id="KW-0597">Phosphoprotein</keyword>
<keyword id="KW-0677">Repeat</keyword>
<keyword id="KW-0808">Transferase</keyword>
<reference key="1">
    <citation type="journal article" date="2022" name="Front. Microbiol.">
        <title>Cloning and functional characterization of the polyketide synthases based on genome mining of Preussia isomera XL-1326.</title>
        <authorList>
            <person name="Liu Q."/>
            <person name="Zhang D."/>
            <person name="Xu Y."/>
            <person name="Gao S."/>
            <person name="Gong Y."/>
            <person name="Cai X."/>
            <person name="Yao M."/>
            <person name="Yang X."/>
        </authorList>
    </citation>
    <scope>NUCLEOTIDE SEQUENCE [MRNA]</scope>
    <scope>FUNCTION</scope>
    <scope>DOMAIN</scope>
    <scope>CATALYTIC ACTIVITY</scope>
    <source>
        <strain>XL-1326</strain>
    </source>
</reference>
<organism>
    <name type="scientific">Preussia isomera</name>
    <name type="common">Coprophilous fungus</name>
    <name type="synonym">Honoratia pisana</name>
    <dbReference type="NCBI Taxonomy" id="325670"/>
    <lineage>
        <taxon>Eukaryota</taxon>
        <taxon>Fungi</taxon>
        <taxon>Dikarya</taxon>
        <taxon>Ascomycota</taxon>
        <taxon>Pezizomycotina</taxon>
        <taxon>Dothideomycetes</taxon>
        <taxon>Pleosporomycetidae</taxon>
        <taxon>Pleosporales</taxon>
        <taxon>Sporormiaceae</taxon>
        <taxon>Preussia/Sporomiella species complex</taxon>
        <taxon>Preussia</taxon>
    </lineage>
</organism>
<sequence length="2197" mass="236015">MSNSTRDYPISAAFFCPQSRAPPAEYLHALYSFLSQNTLGKAFLRHIASLDEVWPIFSEARDDILRLPDARQNINVLVDWAKGGSSTPIAEARSGVIALPSVFIVQLGQYFRYLEANRLSHGDFIGQLKDIGGVHGYCGGAAAALSVACAADETQLIDHAAVLLRLFVGIGCCIEAVDDWTTTESTVIACRLKYEGQGDELCSRFPEPKSISITGNARTLSELFDYAVGLGLPTHKMEITGKAHNPENAELAKDFINLYRRTPALQLPPTFKLQATVRSNRTAEKLTNEGIIEDMITMIIASQCDWNTLLTRVAEDMKVSGRPFHKMVSFGMNDCVPVTPFNRQRLKTTKFEAHVLIEPLKPSRISAAQYPTFSDDAIAITGASLRLPGANNLDELWDLISKGTDCHREIPKDRFDPHNIYRTSQSGFSKAQKYFGNFLEDIKGFDRAYFSMGVREAANIDPQQRLLLELAVEALEASGYLANHVREAGDPVGCFVGASFIEYLENTGAHPPTAYTAPGTIRAFLCGRLSYYFGWTAPAEVIDTACSASMVAINRAVKSIQAGECEMALAGGVNLITGMNNYLDLAKAGFLSPTGQCKPFDQSGDGYCRSDGAGFVVLKKLSQALVNGDPIMGVIPSIETNQGGLSGSLTVPSSTALQALYKRVLSKSGLEPAQITYVEAHGTGTQAGDPIEVESVRAVLGDPTRAHSLSLGSVKGNIGHCETGAGVAGLLKVLAMIKHGGIPPLASHKALNPKIPALETHHMEIAKQLKPWDVPLRAAFVNSYGAAGSNAAVICVEPPPVVTDGSSLIGTEPQKVTLPVIVSGATRKSLVLNARALASYLSQDGSHLSIHDVAFTVNQRRKRNRFCAEVSGTDLPSLVQSLRAVDSPSFESPGKSKPVVLVFSGQNTNAVALDRTIYDTYPVFKAYIDACDSEIVKLGFPSIMEAIFQKEPISTAVALQGSIFAMQYACARSWIDAGLKPRAIIGHSFGELTALAVSGALSLADSLKLVTCRGHLIDTKWGEERGGMLVIHADVATVERFQSRFKAQHDGAELEIACYNSPTTTVVAGPVAYMDAAEQMLATDPDFQGLRKLRIVTSNAFHSSLSDPILADLDSMADTLTWNEPSIPLEACTSEGLASIKEWSASRHTRGSVYFTKAVERIEGRLGACIWVEAGLDSAIIAMARKASSKPDSQVFQSVSTKAGATSFIDGIVNNLWRQGVPLSHLNALSATVKPNPVWLPPYQFEREQHWTEHIDRATEASQASTTSDTIQSTPTQTVQSPPKLISRLASLQYQINTQCERFQKITEGHAVLYEPLCPASLYMECVVMALQELAGDLGSRTLDFENLDFHAGLGLQTDRRVLLDLEEARPHSWTFKVQSTKAGSSRSLLHCSGRVILTESSVPTTFQRLVDGPRSRLDQDKDAEKLMSSRAYGLFSNIMTYSEFLKPISSIILRENESLATIKLPPNQPGLHESTAWKRCDAVFLDGFISSSGLLLNSSSVVQSGHVLIAVGVERAILTAAFQASLASSWQAYATFTMVGETHALCDVFACTPDGEVVAMMTGVRFNKMEISKLAKSLSSVNASSPTGGRTQPPAAPKTQAQPMASRPSPTPLQVSFATAEPAAPEPVQQSTAALARNDIGPVLKSLISNYTGLIEEDVSEDSPLVDLGLDSLSSVEFASEIGTKFGVTLDADTVGDLTLHSLCQRLSGTSNVVSQKMSETPAAAPVKELIETVPSPIVTFSSPVSNSITSVLKSLLGSYTGLQEEDMPDDVPLIDLGLDSLSSVEFASELNDKMGADIDSAVVADMTLSALEQQLGASATPPSTTGSSTPGDISTAATTPYATGASTPDYLVHGNKPSISNGVVAAKDSYQVKTVEYKRVSGVPIHADIYVPLVQRVSPMPLALMIHGGGHMTLSRKAVRPTQAKYLLSHGFLPISIDYRLCPEVNLIDGPIADVRDAYVWACQNLGTHLAEHSISVDGGRVVVVGWSTGGHLAMSLGWSLEEAGVPPPKAVLSFYAPVDFESGELDNQKNPALPKPRMTLDQITKALPRTPVTQYGASSTDETNLGWLHPGDPRSELLLHVFHSDIGLPLILHGLPISGSGRPSPSLVASISPLARLRNGSYTIPTFIIHGTKDVIAPYAAAERFVKIMSEKGVKSGFLSLSGTGHVFDVTMKPDSKGWEDKVKPGLDFLIQNA</sequence>
<protein>
    <recommendedName>
        <fullName evidence="9">Non-reducing polyketide synthase Preu6</fullName>
        <shortName evidence="9">NR-PKS Preu6</shortName>
        <ecNumber evidence="8">2.3.1.-</ecNumber>
    </recommendedName>
    <alternativeName>
        <fullName evidence="9">Lecanoric acid synthase</fullName>
    </alternativeName>
</protein>
<dbReference type="EC" id="2.3.1.-" evidence="8"/>
<dbReference type="EMBL" id="OK493441">
    <property type="protein sequence ID" value="UNY67719.1"/>
    <property type="molecule type" value="mRNA"/>
</dbReference>
<dbReference type="SMR" id="P9WET2"/>
<dbReference type="ESTHER" id="preis-preu6">
    <property type="family name" value="BD-FAE"/>
</dbReference>
<dbReference type="GO" id="GO:0004312">
    <property type="term" value="F:fatty acid synthase activity"/>
    <property type="evidence" value="ECO:0007669"/>
    <property type="project" value="TreeGrafter"/>
</dbReference>
<dbReference type="GO" id="GO:0031177">
    <property type="term" value="F:phosphopantetheine binding"/>
    <property type="evidence" value="ECO:0007669"/>
    <property type="project" value="InterPro"/>
</dbReference>
<dbReference type="GO" id="GO:0006633">
    <property type="term" value="P:fatty acid biosynthetic process"/>
    <property type="evidence" value="ECO:0007669"/>
    <property type="project" value="TreeGrafter"/>
</dbReference>
<dbReference type="GO" id="GO:0044550">
    <property type="term" value="P:secondary metabolite biosynthetic process"/>
    <property type="evidence" value="ECO:0007669"/>
    <property type="project" value="TreeGrafter"/>
</dbReference>
<dbReference type="CDD" id="cd00833">
    <property type="entry name" value="PKS"/>
    <property type="match status" value="1"/>
</dbReference>
<dbReference type="Gene3D" id="3.30.70.3290">
    <property type="match status" value="1"/>
</dbReference>
<dbReference type="Gene3D" id="3.40.47.10">
    <property type="match status" value="1"/>
</dbReference>
<dbReference type="Gene3D" id="1.10.1200.10">
    <property type="entry name" value="ACP-like"/>
    <property type="match status" value="2"/>
</dbReference>
<dbReference type="Gene3D" id="3.40.50.1820">
    <property type="entry name" value="alpha/beta hydrolase"/>
    <property type="match status" value="1"/>
</dbReference>
<dbReference type="Gene3D" id="3.40.366.10">
    <property type="entry name" value="Malonyl-Coenzyme A Acyl Carrier Protein, domain 2"/>
    <property type="match status" value="2"/>
</dbReference>
<dbReference type="Gene3D" id="3.10.129.110">
    <property type="entry name" value="Polyketide synthase dehydratase"/>
    <property type="match status" value="1"/>
</dbReference>
<dbReference type="InterPro" id="IPR029058">
    <property type="entry name" value="AB_hydrolase_fold"/>
</dbReference>
<dbReference type="InterPro" id="IPR001227">
    <property type="entry name" value="Ac_transferase_dom_sf"/>
</dbReference>
<dbReference type="InterPro" id="IPR036736">
    <property type="entry name" value="ACP-like_sf"/>
</dbReference>
<dbReference type="InterPro" id="IPR014043">
    <property type="entry name" value="Acyl_transferase_dom"/>
</dbReference>
<dbReference type="InterPro" id="IPR016035">
    <property type="entry name" value="Acyl_Trfase/lysoPLipase"/>
</dbReference>
<dbReference type="InterPro" id="IPR049492">
    <property type="entry name" value="BD-FAE-like_dom"/>
</dbReference>
<dbReference type="InterPro" id="IPR014031">
    <property type="entry name" value="Ketoacyl_synth_C"/>
</dbReference>
<dbReference type="InterPro" id="IPR014030">
    <property type="entry name" value="Ketoacyl_synth_N"/>
</dbReference>
<dbReference type="InterPro" id="IPR016036">
    <property type="entry name" value="Malonyl_transacylase_ACP-bd"/>
</dbReference>
<dbReference type="InterPro" id="IPR020841">
    <property type="entry name" value="PKS_Beta-ketoAc_synthase_dom"/>
</dbReference>
<dbReference type="InterPro" id="IPR042104">
    <property type="entry name" value="PKS_dehydratase_sf"/>
</dbReference>
<dbReference type="InterPro" id="IPR049900">
    <property type="entry name" value="PKS_mFAS_DH"/>
</dbReference>
<dbReference type="InterPro" id="IPR050091">
    <property type="entry name" value="PKS_NRPS_Biosynth_Enz"/>
</dbReference>
<dbReference type="InterPro" id="IPR020806">
    <property type="entry name" value="PKS_PP-bd"/>
</dbReference>
<dbReference type="InterPro" id="IPR009081">
    <property type="entry name" value="PP-bd_ACP"/>
</dbReference>
<dbReference type="InterPro" id="IPR032088">
    <property type="entry name" value="SAT"/>
</dbReference>
<dbReference type="InterPro" id="IPR016039">
    <property type="entry name" value="Thiolase-like"/>
</dbReference>
<dbReference type="PANTHER" id="PTHR43775">
    <property type="entry name" value="FATTY ACID SYNTHASE"/>
    <property type="match status" value="1"/>
</dbReference>
<dbReference type="PANTHER" id="PTHR43775:SF21">
    <property type="entry name" value="NON-REDUCING POLYKETIDE SYNTHASE AUSA-RELATED"/>
    <property type="match status" value="1"/>
</dbReference>
<dbReference type="Pfam" id="PF00698">
    <property type="entry name" value="Acyl_transf_1"/>
    <property type="match status" value="1"/>
</dbReference>
<dbReference type="Pfam" id="PF20434">
    <property type="entry name" value="BD-FAE"/>
    <property type="match status" value="1"/>
</dbReference>
<dbReference type="Pfam" id="PF00109">
    <property type="entry name" value="ketoacyl-synt"/>
    <property type="match status" value="1"/>
</dbReference>
<dbReference type="Pfam" id="PF02801">
    <property type="entry name" value="Ketoacyl-synt_C"/>
    <property type="match status" value="1"/>
</dbReference>
<dbReference type="Pfam" id="PF00550">
    <property type="entry name" value="PP-binding"/>
    <property type="match status" value="2"/>
</dbReference>
<dbReference type="Pfam" id="PF16073">
    <property type="entry name" value="SAT"/>
    <property type="match status" value="1"/>
</dbReference>
<dbReference type="SMART" id="SM00827">
    <property type="entry name" value="PKS_AT"/>
    <property type="match status" value="1"/>
</dbReference>
<dbReference type="SMART" id="SM00825">
    <property type="entry name" value="PKS_KS"/>
    <property type="match status" value="1"/>
</dbReference>
<dbReference type="SMART" id="SM00823">
    <property type="entry name" value="PKS_PP"/>
    <property type="match status" value="2"/>
</dbReference>
<dbReference type="SMART" id="SM01294">
    <property type="entry name" value="PKS_PP_betabranch"/>
    <property type="match status" value="1"/>
</dbReference>
<dbReference type="SUPFAM" id="SSF47336">
    <property type="entry name" value="ACP-like"/>
    <property type="match status" value="2"/>
</dbReference>
<dbReference type="SUPFAM" id="SSF53474">
    <property type="entry name" value="alpha/beta-Hydrolases"/>
    <property type="match status" value="1"/>
</dbReference>
<dbReference type="SUPFAM" id="SSF52151">
    <property type="entry name" value="FabD/lysophospholipase-like"/>
    <property type="match status" value="1"/>
</dbReference>
<dbReference type="SUPFAM" id="SSF55048">
    <property type="entry name" value="Probable ACP-binding domain of malonyl-CoA ACP transacylase"/>
    <property type="match status" value="1"/>
</dbReference>
<dbReference type="SUPFAM" id="SSF53901">
    <property type="entry name" value="Thiolase-like"/>
    <property type="match status" value="1"/>
</dbReference>
<dbReference type="PROSITE" id="PS50075">
    <property type="entry name" value="CARRIER"/>
    <property type="match status" value="2"/>
</dbReference>
<dbReference type="PROSITE" id="PS52004">
    <property type="entry name" value="KS3_2"/>
    <property type="match status" value="1"/>
</dbReference>
<dbReference type="PROSITE" id="PS52019">
    <property type="entry name" value="PKS_MFAS_DH"/>
    <property type="match status" value="1"/>
</dbReference>
<accession>P9WET2</accession>
<gene>
    <name evidence="9" type="primary">Preu6</name>
</gene>
<feature type="chain" id="PRO_0000456452" description="Non-reducing polyketide synthase Preu6">
    <location>
        <begin position="1"/>
        <end position="2197"/>
    </location>
</feature>
<feature type="domain" description="Ketosynthase family 3 (KS3)" evidence="4 10">
    <location>
        <begin position="375"/>
        <end position="797"/>
    </location>
</feature>
<feature type="domain" description="PKS/mFAS DH" evidence="5">
    <location>
        <begin position="1276"/>
        <end position="1576"/>
    </location>
</feature>
<feature type="domain" description="Carrier 1" evidence="3">
    <location>
        <begin position="1639"/>
        <end position="1719"/>
    </location>
</feature>
<feature type="domain" description="Carrier 2" evidence="3">
    <location>
        <begin position="1748"/>
        <end position="1824"/>
    </location>
</feature>
<feature type="region of interest" description="N-terminal acylcarrier protein transacylase domain (SAT)" evidence="2 10">
    <location>
        <begin position="14"/>
        <end position="253"/>
    </location>
</feature>
<feature type="region of interest" description="Malonyl-CoA:ACP transacylase (MAT) domain" evidence="2 10">
    <location>
        <begin position="901"/>
        <end position="1198"/>
    </location>
</feature>
<feature type="region of interest" description="Disordered" evidence="7">
    <location>
        <begin position="1258"/>
        <end position="1282"/>
    </location>
</feature>
<feature type="region of interest" description="N-terminal hotdog fold" evidence="5">
    <location>
        <begin position="1276"/>
        <end position="1403"/>
    </location>
</feature>
<feature type="region of interest" description="Product template (PT) domain" evidence="2 10">
    <location>
        <begin position="1284"/>
        <end position="1575"/>
    </location>
</feature>
<feature type="region of interest" description="C-terminal hotdog fold" evidence="5">
    <location>
        <begin position="1424"/>
        <end position="1576"/>
    </location>
</feature>
<feature type="region of interest" description="Disordered" evidence="7">
    <location>
        <begin position="1581"/>
        <end position="1614"/>
    </location>
</feature>
<feature type="region of interest" description="Disordered" evidence="7">
    <location>
        <begin position="1817"/>
        <end position="1841"/>
    </location>
</feature>
<feature type="region of interest" description="Thioesterase (TE) domain" evidence="2 10">
    <location>
        <begin position="1870"/>
        <end position="2197"/>
    </location>
</feature>
<feature type="compositionally biased region" description="Polar residues" evidence="7">
    <location>
        <begin position="1260"/>
        <end position="1281"/>
    </location>
</feature>
<feature type="compositionally biased region" description="Polar residues" evidence="7">
    <location>
        <begin position="1581"/>
        <end position="1591"/>
    </location>
</feature>
<feature type="compositionally biased region" description="Low complexity" evidence="7">
    <location>
        <begin position="1818"/>
        <end position="1833"/>
    </location>
</feature>
<feature type="active site" description="For beta-ketoacyl synthase activity" evidence="4">
    <location>
        <position position="546"/>
    </location>
</feature>
<feature type="active site" description="For beta-ketoacyl synthase activity" evidence="4">
    <location>
        <position position="681"/>
    </location>
</feature>
<feature type="active site" description="For beta-ketoacyl synthase activity" evidence="4">
    <location>
        <position position="720"/>
    </location>
</feature>
<feature type="active site" description="For acyl/malonyl transferase activity" evidence="6">
    <location>
        <position position="988"/>
    </location>
</feature>
<feature type="active site" description="Proton acceptor; for dehydratase activity" evidence="5">
    <location>
        <position position="1310"/>
    </location>
</feature>
<feature type="active site" description="Proton donor; for dehydratase activity" evidence="5">
    <location>
        <position position="1487"/>
    </location>
</feature>
<feature type="active site" description="For thioesterase activity" evidence="1">
    <location>
        <position position="1990"/>
    </location>
</feature>
<feature type="active site" description="For thioesterase activity" evidence="1">
    <location>
        <position position="2137"/>
    </location>
</feature>
<feature type="modified residue" description="O-(pantetheine 4'-phosphoryl)serine" evidence="3">
    <location>
        <position position="1673"/>
    </location>
</feature>
<feature type="modified residue" description="O-(pantetheine 4'-phosphoryl)serine" evidence="3">
    <location>
        <position position="1782"/>
    </location>
</feature>
<comment type="function">
    <text evidence="8 10">Non-reducing polyketide synthase; part of a gene cluster that mediates the biosynthesis of a yet unidentified natural product (Probable). The first step in the pathway is performed by Preu6 that condenses 2 acetyl-CoA starter units with 6 malonyl-CoA units to produce lecanoric acid (LA), also known as orsellinate depside, an intermediate that has significant antifungal activity against the plant pathogen Botryosphaeria berengeriana (PubMed:35602042). The biosynthesis probably occurs via the formation of 2 orsellinate intermediates fused together by the C-terminal thioesterase (TE) domain that finally releases lecanoric acid (Probable).</text>
</comment>
<comment type="catalytic activity">
    <reaction evidence="8">
        <text>6 malonyl-CoA + 2 acetyl-CoA + 5 H(+) = o-orsellinate depside + 6 CO2 + 8 CoA + H2O</text>
        <dbReference type="Rhea" id="RHEA:72467"/>
        <dbReference type="ChEBI" id="CHEBI:15377"/>
        <dbReference type="ChEBI" id="CHEBI:15378"/>
        <dbReference type="ChEBI" id="CHEBI:16526"/>
        <dbReference type="ChEBI" id="CHEBI:57287"/>
        <dbReference type="ChEBI" id="CHEBI:57288"/>
        <dbReference type="ChEBI" id="CHEBI:57384"/>
        <dbReference type="ChEBI" id="CHEBI:57548"/>
    </reaction>
    <physiologicalReaction direction="left-to-right" evidence="8">
        <dbReference type="Rhea" id="RHEA:72468"/>
    </physiologicalReaction>
</comment>
<comment type="cofactor">
    <cofactor evidence="3">
        <name>pantetheine 4'-phosphate</name>
        <dbReference type="ChEBI" id="CHEBI:47942"/>
    </cofactor>
</comment>
<comment type="domain">
    <text evidence="10">Multidomain protein; including a starter unit:ACP transacylase (SAT) that selects the starter unit; a ketosynthase (KS) that catalyzes repeated decarboxylative condensation to elongate the polyketide backbone; a malonyl-CoA:ACP transacylase (MAT) that selects and transfers the extender unit malonyl-CoA; a product template (PT) domain that controls the immediate cyclization regioselectivity of the reactive polyketide backbone; and an acyl-carrier protein (ACP) that serves as the tether of the growing and completed polyketide via its phosphopantetheinyl arm.</text>
</comment>
<comment type="domain">
    <text evidence="1">The release of the polyketide chain from the non-reducing polyketide synthase is mediated by the thioesterase (TE) domain localized at the C-ter of the protein.</text>
</comment>
<name>PREU6_PREIS</name>
<evidence type="ECO:0000250" key="1">
    <source>
        <dbReference type="UniProtKB" id="Q5ATJ7"/>
    </source>
</evidence>
<evidence type="ECO:0000255" key="2"/>
<evidence type="ECO:0000255" key="3">
    <source>
        <dbReference type="PROSITE-ProRule" id="PRU00258"/>
    </source>
</evidence>
<evidence type="ECO:0000255" key="4">
    <source>
        <dbReference type="PROSITE-ProRule" id="PRU01348"/>
    </source>
</evidence>
<evidence type="ECO:0000255" key="5">
    <source>
        <dbReference type="PROSITE-ProRule" id="PRU01363"/>
    </source>
</evidence>
<evidence type="ECO:0000255" key="6">
    <source>
        <dbReference type="PROSITE-ProRule" id="PRU10022"/>
    </source>
</evidence>
<evidence type="ECO:0000256" key="7">
    <source>
        <dbReference type="SAM" id="MobiDB-lite"/>
    </source>
</evidence>
<evidence type="ECO:0000269" key="8">
    <source>
    </source>
</evidence>
<evidence type="ECO:0000303" key="9">
    <source>
    </source>
</evidence>
<evidence type="ECO:0000305" key="10">
    <source>
    </source>
</evidence>
<proteinExistence type="evidence at protein level"/>